<accession>Q0VD83</accession>
<accession>H3BU97</accession>
<accession>Q0VD81</accession>
<accession>Q8NC15</accession>
<accession>Q9NPJ9</accession>
<keyword id="KW-0025">Alternative splicing</keyword>
<keyword id="KW-0065">Atherosclerosis</keyword>
<keyword id="KW-1003">Cell membrane</keyword>
<keyword id="KW-0153">Cholesterol metabolism</keyword>
<keyword id="KW-0162">Chylomicron</keyword>
<keyword id="KW-0903">Direct protein sequencing</keyword>
<keyword id="KW-0427">LDL</keyword>
<keyword id="KW-0443">Lipid metabolism</keyword>
<keyword id="KW-0445">Lipid transport</keyword>
<keyword id="KW-0472">Membrane</keyword>
<keyword id="KW-0597">Phosphoprotein</keyword>
<keyword id="KW-1267">Proteomics identification</keyword>
<keyword id="KW-0675">Receptor</keyword>
<keyword id="KW-1185">Reference proteome</keyword>
<keyword id="KW-0753">Steroid metabolism</keyword>
<keyword id="KW-1207">Sterol metabolism</keyword>
<keyword id="KW-0813">Transport</keyword>
<keyword id="KW-0850">VLDL</keyword>
<comment type="function">
    <text evidence="4 7 10">Macrophage receptor that binds to the apolipoprotein B48 (APOB) of dietary triglyceride (TG)-rich lipoproteins (TRL) or to a like domain of APOB in hypertriglyceridemic very low density lipoprotein (HTG-VLDL). Binds and internalizes TRL when out of the context of the macrophage. May provide essential lipids to reticuloendothelial cells. Could also be involved in foam cell formation with elevated TRL and remnant lipoprotein (RLP). Mediates the rapid high-affinity uptake of chylomicrons (CM), HTG-VLDL, and trypsinized (tryp) VLDL devoid of APOE in vitro in macrophages.</text>
</comment>
<comment type="subunit">
    <text>Homodimer.</text>
</comment>
<comment type="subcellular location">
    <subcellularLocation>
        <location evidence="3 9">Cell membrane</location>
        <topology evidence="3 9">Peripheral membrane protein</topology>
    </subcellularLocation>
    <text>Binds monocyte-macrophage membrane. Thought to be anchored in the membrane through an interaction with an integral membrane protein.</text>
</comment>
<comment type="alternative products">
    <event type="alternative splicing"/>
    <isoform>
        <id>Q0VD83-4</id>
        <name>4</name>
        <sequence type="displayed"/>
    </isoform>
    <isoform>
        <id>Q0VD83-2</id>
        <name>2</name>
        <sequence type="described" ref="VSP_060193"/>
    </isoform>
    <isoform>
        <id>Q0VD83-3</id>
        <name>3</name>
        <sequence type="described" ref="VSP_060194"/>
    </isoform>
</comment>
<comment type="tissue specificity">
    <text evidence="3 4">Expressed in peripheral blood leukocytes &gt; bone marrow = spleen &gt; lymph node, and only faintly visible in appendix and thymus. Expressed in the brain, heart, kidney, liver, lung, pancreas, and placenta. Expressed primarily by reticuloendothelial cells: monocytes, macrophages, and endothelial cells. Expressed in atherosclerotic lesion foam cells.</text>
</comment>
<comment type="induction">
    <text evidence="5 7">Suppressed significantly by PPARA and PPARG in THP-1 and blood-borne monocyte-macrophages. Decreased after pitavastatin treatment in peripheral blood macrophages and remnant lipoprotein (RLP)-induced foam cell formation.</text>
</comment>
<comment type="PTM">
    <text evidence="9">There are 2 forms in macrophages, the membrane-binding proteins 200 kDa (MBP 200) and 235 kDa (MBP 235), that can be reduced into a single active ligand-binding species with intermediate mobility (MBP 200R).</text>
</comment>
<dbReference type="EMBL" id="AF141332">
    <property type="protein sequence ID" value="AAF76255.1"/>
    <property type="molecule type" value="mRNA"/>
</dbReference>
<dbReference type="EMBL" id="AF141333">
    <property type="protein sequence ID" value="AAF76256.1"/>
    <property type="molecule type" value="Genomic_DNA"/>
</dbReference>
<dbReference type="EMBL" id="AC138894">
    <property type="status" value="NOT_ANNOTATED_CDS"/>
    <property type="molecule type" value="Genomic_DNA"/>
</dbReference>
<dbReference type="EMBL" id="BC119786">
    <property type="protein sequence ID" value="AAI19787.1"/>
    <property type="molecule type" value="mRNA"/>
</dbReference>
<dbReference type="EMBL" id="BC119788">
    <property type="protein sequence ID" value="AAI19789.1"/>
    <property type="molecule type" value="mRNA"/>
</dbReference>
<dbReference type="EMBL" id="AK075085">
    <property type="status" value="NOT_ANNOTATED_CDS"/>
    <property type="molecule type" value="mRNA"/>
</dbReference>
<dbReference type="CCDS" id="CCDS58442.1">
    <molecule id="Q0VD83-4"/>
</dbReference>
<dbReference type="RefSeq" id="NP_061160.3">
    <molecule id="Q0VD83-4"/>
    <property type="nucleotide sequence ID" value="NM_018690.4"/>
</dbReference>
<dbReference type="SMR" id="Q0VD83"/>
<dbReference type="BioGRID" id="120996">
    <property type="interactions" value="3"/>
</dbReference>
<dbReference type="FunCoup" id="Q0VD83">
    <property type="interactions" value="430"/>
</dbReference>
<dbReference type="IntAct" id="Q0VD83">
    <property type="interactions" value="3"/>
</dbReference>
<dbReference type="STRING" id="9606.ENSP00000457539"/>
<dbReference type="DrugBank" id="DB14003">
    <property type="generic name" value="alpha-Tocopherol acetate"/>
</dbReference>
<dbReference type="DrugBank" id="DB09130">
    <property type="generic name" value="Copper"/>
</dbReference>
<dbReference type="DrugBank" id="DB11635">
    <property type="generic name" value="Tocofersolan"/>
</dbReference>
<dbReference type="DrugBank" id="DB11251">
    <property type="generic name" value="Tocopherol"/>
</dbReference>
<dbReference type="DrugBank" id="DB01593">
    <property type="generic name" value="Zinc"/>
</dbReference>
<dbReference type="DrugBank" id="DB14487">
    <property type="generic name" value="Zinc acetate"/>
</dbReference>
<dbReference type="DrugBank" id="DB14533">
    <property type="generic name" value="Zinc chloride"/>
</dbReference>
<dbReference type="DrugBank" id="DB14548">
    <property type="generic name" value="Zinc sulfate, unspecified form"/>
</dbReference>
<dbReference type="GlyGen" id="Q0VD83">
    <property type="glycosylation" value="1 site, 1 O-linked glycan (1 site)"/>
</dbReference>
<dbReference type="iPTMnet" id="Q0VD83"/>
<dbReference type="PhosphoSitePlus" id="Q0VD83"/>
<dbReference type="SwissPalm" id="Q0VD83"/>
<dbReference type="BioMuta" id="APOBR"/>
<dbReference type="DMDM" id="519668661"/>
<dbReference type="jPOST" id="Q0VD83"/>
<dbReference type="MassIVE" id="Q0VD83"/>
<dbReference type="PaxDb" id="9606-ENSP00000457539"/>
<dbReference type="PeptideAtlas" id="Q0VD83"/>
<dbReference type="ProteomicsDB" id="42868"/>
<dbReference type="ProteomicsDB" id="58813">
    <molecule id="Q0VD83-2"/>
</dbReference>
<dbReference type="ProteomicsDB" id="58814">
    <molecule id="Q0VD83-3"/>
</dbReference>
<dbReference type="Pumba" id="Q0VD83"/>
<dbReference type="Antibodypedia" id="26469">
    <property type="antibodies" value="240 antibodies from 22 providers"/>
</dbReference>
<dbReference type="DNASU" id="55911"/>
<dbReference type="Ensembl" id="ENST00000564831.6">
    <molecule id="Q0VD83-4"/>
    <property type="protein sequence ID" value="ENSP00000457539.1"/>
    <property type="gene ID" value="ENSG00000184730.12"/>
</dbReference>
<dbReference type="GeneID" id="55911"/>
<dbReference type="KEGG" id="hsa:55911"/>
<dbReference type="MANE-Select" id="ENST00000564831.6">
    <property type="protein sequence ID" value="ENSP00000457539.1"/>
    <property type="RefSeq nucleotide sequence ID" value="NM_018690.4"/>
    <property type="RefSeq protein sequence ID" value="NP_061160.3"/>
</dbReference>
<dbReference type="UCSC" id="uc002dqb.2">
    <molecule id="Q0VD83-4"/>
    <property type="organism name" value="human"/>
</dbReference>
<dbReference type="AGR" id="HGNC:24087"/>
<dbReference type="CTD" id="55911"/>
<dbReference type="DisGeNET" id="55911"/>
<dbReference type="GeneCards" id="APOBR"/>
<dbReference type="HGNC" id="HGNC:24087">
    <property type="gene designation" value="APOBR"/>
</dbReference>
<dbReference type="HPA" id="ENSG00000184730">
    <property type="expression patterns" value="Group enriched (bone marrow, intestine, lung, lymphoid tissue)"/>
</dbReference>
<dbReference type="MIM" id="605220">
    <property type="type" value="gene"/>
</dbReference>
<dbReference type="neXtProt" id="NX_Q0VD83"/>
<dbReference type="OpenTargets" id="ENSG00000184730"/>
<dbReference type="VEuPathDB" id="HostDB:ENSG00000184730"/>
<dbReference type="eggNOG" id="ENOG502SSHE">
    <property type="taxonomic scope" value="Eukaryota"/>
</dbReference>
<dbReference type="GeneTree" id="ENSGT00530000065031"/>
<dbReference type="HOGENOM" id="CLU_006101_0_0_1"/>
<dbReference type="InParanoid" id="Q0VD83"/>
<dbReference type="OMA" id="GTHQGDT"/>
<dbReference type="OrthoDB" id="9450656at2759"/>
<dbReference type="PAN-GO" id="Q0VD83">
    <property type="GO annotations" value="2 GO annotations based on evolutionary models"/>
</dbReference>
<dbReference type="PhylomeDB" id="Q0VD83"/>
<dbReference type="TreeFam" id="TF337147"/>
<dbReference type="PathwayCommons" id="Q0VD83"/>
<dbReference type="Reactome" id="R-HSA-8964046">
    <property type="pathway name" value="VLDL clearance"/>
</dbReference>
<dbReference type="SignaLink" id="Q0VD83"/>
<dbReference type="BioGRID-ORCS" id="55911">
    <property type="hits" value="21 hits in 1158 CRISPR screens"/>
</dbReference>
<dbReference type="ChiTaRS" id="APOBR">
    <property type="organism name" value="human"/>
</dbReference>
<dbReference type="GenomeRNAi" id="55911"/>
<dbReference type="Pharos" id="Q0VD83">
    <property type="development level" value="Tbio"/>
</dbReference>
<dbReference type="PRO" id="PR:Q0VD83"/>
<dbReference type="Proteomes" id="UP000005640">
    <property type="component" value="Chromosome 16"/>
</dbReference>
<dbReference type="RNAct" id="Q0VD83">
    <property type="molecule type" value="protein"/>
</dbReference>
<dbReference type="Bgee" id="ENSG00000184730">
    <property type="expression patterns" value="Expressed in monocyte and 97 other cell types or tissues"/>
</dbReference>
<dbReference type="ExpressionAtlas" id="Q0VD83">
    <property type="expression patterns" value="baseline and differential"/>
</dbReference>
<dbReference type="GO" id="GO:0005813">
    <property type="term" value="C:centrosome"/>
    <property type="evidence" value="ECO:0000314"/>
    <property type="project" value="HPA"/>
</dbReference>
<dbReference type="GO" id="GO:0042627">
    <property type="term" value="C:chylomicron"/>
    <property type="evidence" value="ECO:0007669"/>
    <property type="project" value="UniProtKB-KW"/>
</dbReference>
<dbReference type="GO" id="GO:0034362">
    <property type="term" value="C:low-density lipoprotein particle"/>
    <property type="evidence" value="ECO:0007669"/>
    <property type="project" value="UniProtKB-KW"/>
</dbReference>
<dbReference type="GO" id="GO:0016020">
    <property type="term" value="C:membrane"/>
    <property type="evidence" value="ECO:0007005"/>
    <property type="project" value="UniProtKB"/>
</dbReference>
<dbReference type="GO" id="GO:0005886">
    <property type="term" value="C:plasma membrane"/>
    <property type="evidence" value="ECO:0000314"/>
    <property type="project" value="HPA"/>
</dbReference>
<dbReference type="GO" id="GO:0034361">
    <property type="term" value="C:very-low-density lipoprotein particle"/>
    <property type="evidence" value="ECO:0007669"/>
    <property type="project" value="UniProtKB-KW"/>
</dbReference>
<dbReference type="GO" id="GO:0030229">
    <property type="term" value="F:very-low-density lipoprotein particle receptor activity"/>
    <property type="evidence" value="ECO:0000318"/>
    <property type="project" value="GO_Central"/>
</dbReference>
<dbReference type="GO" id="GO:0008203">
    <property type="term" value="P:cholesterol metabolic process"/>
    <property type="evidence" value="ECO:0007669"/>
    <property type="project" value="UniProtKB-KW"/>
</dbReference>
<dbReference type="GO" id="GO:0006869">
    <property type="term" value="P:lipid transport"/>
    <property type="evidence" value="ECO:0007669"/>
    <property type="project" value="UniProtKB-KW"/>
</dbReference>
<dbReference type="GO" id="GO:0006641">
    <property type="term" value="P:triglyceride metabolic process"/>
    <property type="evidence" value="ECO:0000318"/>
    <property type="project" value="GO_Central"/>
</dbReference>
<dbReference type="InterPro" id="IPR026158">
    <property type="entry name" value="ApolipoprotB_rcpt"/>
</dbReference>
<dbReference type="PANTHER" id="PTHR15964:SF0">
    <property type="entry name" value="APOLIPOPROTEIN B RECEPTOR"/>
    <property type="match status" value="1"/>
</dbReference>
<dbReference type="PANTHER" id="PTHR15964">
    <property type="entry name" value="APOLIPOPROTEIN B48 RECEPTOR"/>
    <property type="match status" value="1"/>
</dbReference>
<protein>
    <recommendedName>
        <fullName evidence="11">Apolipoprotein B receptor</fullName>
    </recommendedName>
    <alternativeName>
        <fullName>Apolipoprotein B-100 receptor</fullName>
    </alternativeName>
    <alternativeName>
        <fullName>Apolipoprotein B-48 receptor</fullName>
        <shortName>Apolipoprotein B48 receptor</shortName>
        <shortName>apoB-48R</shortName>
    </alternativeName>
</protein>
<evidence type="ECO:0000250" key="1">
    <source>
        <dbReference type="UniProtKB" id="Q8VBT6"/>
    </source>
</evidence>
<evidence type="ECO:0000256" key="2">
    <source>
        <dbReference type="SAM" id="MobiDB-lite"/>
    </source>
</evidence>
<evidence type="ECO:0000269" key="3">
    <source>
    </source>
</evidence>
<evidence type="ECO:0000269" key="4">
    <source>
    </source>
</evidence>
<evidence type="ECO:0000269" key="5">
    <source>
    </source>
</evidence>
<evidence type="ECO:0000269" key="6">
    <source>
    </source>
</evidence>
<evidence type="ECO:0000269" key="7">
    <source>
    </source>
</evidence>
<evidence type="ECO:0000269" key="8">
    <source>
    </source>
</evidence>
<evidence type="ECO:0000269" key="9">
    <source>
    </source>
</evidence>
<evidence type="ECO:0000269" key="10">
    <source>
    </source>
</evidence>
<evidence type="ECO:0000305" key="11"/>
<evidence type="ECO:0000312" key="12">
    <source>
        <dbReference type="HGNC" id="HGNC:24087"/>
    </source>
</evidence>
<evidence type="ECO:0007744" key="13">
    <source>
    </source>
</evidence>
<evidence type="ECO:0007744" key="14">
    <source>
    </source>
</evidence>
<reference key="1">
    <citation type="journal article" date="2000" name="Proc. Natl. Acad. Sci. U.S.A.">
        <title>A macrophage receptor for apolipoprotein B48: cloning, expression, and atherosclerosis.</title>
        <authorList>
            <person name="Brown M.L."/>
            <person name="Ramprasad M.P."/>
            <person name="Umeda P.K."/>
            <person name="Tanaka A."/>
            <person name="Kobayashi Y."/>
            <person name="Watanabe T."/>
            <person name="Shimoyamada H."/>
            <person name="Kuo W.-L."/>
            <person name="Li R."/>
            <person name="Song R."/>
            <person name="Bradley W.A."/>
            <person name="Gianturco S.H."/>
        </authorList>
    </citation>
    <scope>NUCLEOTIDE SEQUENCE [GENOMIC DNA / MRNA] (ISOFORM 4)</scope>
    <scope>PROTEIN SEQUENCE OF 823-830; 866-877 AND 919-928</scope>
    <scope>FUNCTION</scope>
    <scope>TISSUE SPECIFICITY</scope>
    <scope>VARIANTS ALA-428 AND 352-GLU--GLY-360 DEL</scope>
    <source>
        <tissue>Monocytic leukemia</tissue>
        <tissue>Placenta</tissue>
    </source>
</reference>
<reference key="2">
    <citation type="journal article" date="2004" name="Nature">
        <title>The sequence and analysis of duplication-rich human chromosome 16.</title>
        <authorList>
            <person name="Martin J."/>
            <person name="Han C."/>
            <person name="Gordon L.A."/>
            <person name="Terry A."/>
            <person name="Prabhakar S."/>
            <person name="She X."/>
            <person name="Xie G."/>
            <person name="Hellsten U."/>
            <person name="Chan Y.M."/>
            <person name="Altherr M."/>
            <person name="Couronne O."/>
            <person name="Aerts A."/>
            <person name="Bajorek E."/>
            <person name="Black S."/>
            <person name="Blumer H."/>
            <person name="Branscomb E."/>
            <person name="Brown N.C."/>
            <person name="Bruno W.J."/>
            <person name="Buckingham J.M."/>
            <person name="Callen D.F."/>
            <person name="Campbell C.S."/>
            <person name="Campbell M.L."/>
            <person name="Campbell E.W."/>
            <person name="Caoile C."/>
            <person name="Challacombe J.F."/>
            <person name="Chasteen L.A."/>
            <person name="Chertkov O."/>
            <person name="Chi H.C."/>
            <person name="Christensen M."/>
            <person name="Clark L.M."/>
            <person name="Cohn J.D."/>
            <person name="Denys M."/>
            <person name="Detter J.C."/>
            <person name="Dickson M."/>
            <person name="Dimitrijevic-Bussod M."/>
            <person name="Escobar J."/>
            <person name="Fawcett J.J."/>
            <person name="Flowers D."/>
            <person name="Fotopulos D."/>
            <person name="Glavina T."/>
            <person name="Gomez M."/>
            <person name="Gonzales E."/>
            <person name="Goodstein D."/>
            <person name="Goodwin L.A."/>
            <person name="Grady D.L."/>
            <person name="Grigoriev I."/>
            <person name="Groza M."/>
            <person name="Hammon N."/>
            <person name="Hawkins T."/>
            <person name="Haydu L."/>
            <person name="Hildebrand C.E."/>
            <person name="Huang W."/>
            <person name="Israni S."/>
            <person name="Jett J."/>
            <person name="Jewett P.B."/>
            <person name="Kadner K."/>
            <person name="Kimball H."/>
            <person name="Kobayashi A."/>
            <person name="Krawczyk M.-C."/>
            <person name="Leyba T."/>
            <person name="Longmire J.L."/>
            <person name="Lopez F."/>
            <person name="Lou Y."/>
            <person name="Lowry S."/>
            <person name="Ludeman T."/>
            <person name="Manohar C.F."/>
            <person name="Mark G.A."/>
            <person name="McMurray K.L."/>
            <person name="Meincke L.J."/>
            <person name="Morgan J."/>
            <person name="Moyzis R.K."/>
            <person name="Mundt M.O."/>
            <person name="Munk A.C."/>
            <person name="Nandkeshwar R.D."/>
            <person name="Pitluck S."/>
            <person name="Pollard M."/>
            <person name="Predki P."/>
            <person name="Parson-Quintana B."/>
            <person name="Ramirez L."/>
            <person name="Rash S."/>
            <person name="Retterer J."/>
            <person name="Ricke D.O."/>
            <person name="Robinson D.L."/>
            <person name="Rodriguez A."/>
            <person name="Salamov A."/>
            <person name="Saunders E.H."/>
            <person name="Scott D."/>
            <person name="Shough T."/>
            <person name="Stallings R.L."/>
            <person name="Stalvey M."/>
            <person name="Sutherland R.D."/>
            <person name="Tapia R."/>
            <person name="Tesmer J.G."/>
            <person name="Thayer N."/>
            <person name="Thompson L.S."/>
            <person name="Tice H."/>
            <person name="Torney D.C."/>
            <person name="Tran-Gyamfi M."/>
            <person name="Tsai M."/>
            <person name="Ulanovsky L.E."/>
            <person name="Ustaszewska A."/>
            <person name="Vo N."/>
            <person name="White P.S."/>
            <person name="Williams A.L."/>
            <person name="Wills P.L."/>
            <person name="Wu J.-R."/>
            <person name="Wu K."/>
            <person name="Yang J."/>
            <person name="DeJong P."/>
            <person name="Bruce D."/>
            <person name="Doggett N.A."/>
            <person name="Deaven L."/>
            <person name="Schmutz J."/>
            <person name="Grimwood J."/>
            <person name="Richardson P."/>
            <person name="Rokhsar D.S."/>
            <person name="Eichler E.E."/>
            <person name="Gilna P."/>
            <person name="Lucas S.M."/>
            <person name="Myers R.M."/>
            <person name="Rubin E.M."/>
            <person name="Pennacchio L.A."/>
        </authorList>
    </citation>
    <scope>NUCLEOTIDE SEQUENCE [LARGE SCALE GENOMIC DNA]</scope>
</reference>
<reference key="3">
    <citation type="journal article" date="2004" name="Genome Res.">
        <title>The status, quality, and expansion of the NIH full-length cDNA project: the Mammalian Gene Collection (MGC).</title>
        <authorList>
            <consortium name="The MGC Project Team"/>
        </authorList>
    </citation>
    <scope>NUCLEOTIDE SEQUENCE [LARGE SCALE MRNA] (ISOFORMS 4 AND 2)</scope>
    <scope>VARIANTS ALA-428 AND 352-GLU--GLY-360 DEL</scope>
</reference>
<reference key="4">
    <citation type="journal article" date="2004" name="Nat. Genet.">
        <title>Complete sequencing and characterization of 21,243 full-length human cDNAs.</title>
        <authorList>
            <person name="Ota T."/>
            <person name="Suzuki Y."/>
            <person name="Nishikawa T."/>
            <person name="Otsuki T."/>
            <person name="Sugiyama T."/>
            <person name="Irie R."/>
            <person name="Wakamatsu A."/>
            <person name="Hayashi K."/>
            <person name="Sato H."/>
            <person name="Nagai K."/>
            <person name="Kimura K."/>
            <person name="Makita H."/>
            <person name="Sekine M."/>
            <person name="Obayashi M."/>
            <person name="Nishi T."/>
            <person name="Shibahara T."/>
            <person name="Tanaka T."/>
            <person name="Ishii S."/>
            <person name="Yamamoto J."/>
            <person name="Saito K."/>
            <person name="Kawai Y."/>
            <person name="Isono Y."/>
            <person name="Nakamura Y."/>
            <person name="Nagahari K."/>
            <person name="Murakami K."/>
            <person name="Yasuda T."/>
            <person name="Iwayanagi T."/>
            <person name="Wagatsuma M."/>
            <person name="Shiratori A."/>
            <person name="Sudo H."/>
            <person name="Hosoiri T."/>
            <person name="Kaku Y."/>
            <person name="Kodaira H."/>
            <person name="Kondo H."/>
            <person name="Sugawara M."/>
            <person name="Takahashi M."/>
            <person name="Kanda K."/>
            <person name="Yokoi T."/>
            <person name="Furuya T."/>
            <person name="Kikkawa E."/>
            <person name="Omura Y."/>
            <person name="Abe K."/>
            <person name="Kamihara K."/>
            <person name="Katsuta N."/>
            <person name="Sato K."/>
            <person name="Tanikawa M."/>
            <person name="Yamazaki M."/>
            <person name="Ninomiya K."/>
            <person name="Ishibashi T."/>
            <person name="Yamashita H."/>
            <person name="Murakawa K."/>
            <person name="Fujimori K."/>
            <person name="Tanai H."/>
            <person name="Kimata M."/>
            <person name="Watanabe M."/>
            <person name="Hiraoka S."/>
            <person name="Chiba Y."/>
            <person name="Ishida S."/>
            <person name="Ono Y."/>
            <person name="Takiguchi S."/>
            <person name="Watanabe S."/>
            <person name="Yosida M."/>
            <person name="Hotuta T."/>
            <person name="Kusano J."/>
            <person name="Kanehori K."/>
            <person name="Takahashi-Fujii A."/>
            <person name="Hara H."/>
            <person name="Tanase T.-O."/>
            <person name="Nomura Y."/>
            <person name="Togiya S."/>
            <person name="Komai F."/>
            <person name="Hara R."/>
            <person name="Takeuchi K."/>
            <person name="Arita M."/>
            <person name="Imose N."/>
            <person name="Musashino K."/>
            <person name="Yuuki H."/>
            <person name="Oshima A."/>
            <person name="Sasaki N."/>
            <person name="Aotsuka S."/>
            <person name="Yoshikawa Y."/>
            <person name="Matsunawa H."/>
            <person name="Ichihara T."/>
            <person name="Shiohata N."/>
            <person name="Sano S."/>
            <person name="Moriya S."/>
            <person name="Momiyama H."/>
            <person name="Satoh N."/>
            <person name="Takami S."/>
            <person name="Terashima Y."/>
            <person name="Suzuki O."/>
            <person name="Nakagawa S."/>
            <person name="Senoh A."/>
            <person name="Mizoguchi H."/>
            <person name="Goto Y."/>
            <person name="Shimizu F."/>
            <person name="Wakebe H."/>
            <person name="Hishigaki H."/>
            <person name="Watanabe T."/>
            <person name="Sugiyama A."/>
            <person name="Takemoto M."/>
            <person name="Kawakami B."/>
            <person name="Yamazaki M."/>
            <person name="Watanabe K."/>
            <person name="Kumagai A."/>
            <person name="Itakura S."/>
            <person name="Fukuzumi Y."/>
            <person name="Fujimori Y."/>
            <person name="Komiyama M."/>
            <person name="Tashiro H."/>
            <person name="Tanigami A."/>
            <person name="Fujiwara T."/>
            <person name="Ono T."/>
            <person name="Yamada K."/>
            <person name="Fujii Y."/>
            <person name="Ozaki K."/>
            <person name="Hirao M."/>
            <person name="Ohmori Y."/>
            <person name="Kawabata A."/>
            <person name="Hikiji T."/>
            <person name="Kobatake N."/>
            <person name="Inagaki H."/>
            <person name="Ikema Y."/>
            <person name="Okamoto S."/>
            <person name="Okitani R."/>
            <person name="Kawakami T."/>
            <person name="Noguchi S."/>
            <person name="Itoh T."/>
            <person name="Shigeta K."/>
            <person name="Senba T."/>
            <person name="Matsumura K."/>
            <person name="Nakajima Y."/>
            <person name="Mizuno T."/>
            <person name="Morinaga M."/>
            <person name="Sasaki M."/>
            <person name="Togashi T."/>
            <person name="Oyama M."/>
            <person name="Hata H."/>
            <person name="Watanabe M."/>
            <person name="Komatsu T."/>
            <person name="Mizushima-Sugano J."/>
            <person name="Satoh T."/>
            <person name="Shirai Y."/>
            <person name="Takahashi Y."/>
            <person name="Nakagawa K."/>
            <person name="Okumura K."/>
            <person name="Nagase T."/>
            <person name="Nomura N."/>
            <person name="Kikuchi H."/>
            <person name="Masuho Y."/>
            <person name="Yamashita R."/>
            <person name="Nakai K."/>
            <person name="Yada T."/>
            <person name="Nakamura Y."/>
            <person name="Ohara O."/>
            <person name="Isogai T."/>
            <person name="Sugano S."/>
        </authorList>
    </citation>
    <scope>NUCLEOTIDE SEQUENCE [LARGE SCALE MRNA] OF 765-1097 (ISOFORM 3)</scope>
    <source>
        <tissue>Placenta</tissue>
    </source>
</reference>
<reference key="5">
    <citation type="journal article" date="1999" name="J. Lipid Res.">
        <title>Antipeptide antibodies reveal interrelationships of MBP 200 and MBP 235: unique apoB-specific receptors for triglyceride-rich lipoproteins on human monocyte-macrophages.</title>
        <authorList>
            <person name="Bradley W.A."/>
            <person name="Brown M.L."/>
            <person name="Ramprasad M.P."/>
            <person name="Li R."/>
            <person name="Song R."/>
            <person name="Gianturco S.H."/>
        </authorList>
    </citation>
    <scope>PROTEIN SEQUENCE OF 919-928</scope>
    <scope>SUBCELLULAR LOCATION</scope>
    <scope>TISSUE SPECIFICITY</scope>
    <scope>POST-TRANSLATIONAL MODIFICATION</scope>
</reference>
<reference key="6">
    <citation type="journal article" date="1995" name="Biochemistry">
        <title>Human THP-1 monocyte-macrophage membrane binding proteins: distinct receptor(s) for triglyceride-rich lipoproteins.</title>
        <authorList>
            <person name="Ramprasad M.P."/>
            <person name="Li R."/>
            <person name="Bradley W.A."/>
            <person name="Gianturco S.H."/>
        </authorList>
    </citation>
    <scope>SUBCELLULAR LOCATION</scope>
</reference>
<reference key="7">
    <citation type="journal article" date="1998" name="Arterioscler. Thromb. Vasc. Biol.">
        <title>Apolipoprotein B-48 or its apolipoprotein B-100 equivalent mediates the binding of triglyceride-rich lipoproteins to their unique human monocyte-macrophage receptor.</title>
        <authorList>
            <person name="Gianturco S.H."/>
            <person name="Ramprasad M.P."/>
            <person name="Song R."/>
            <person name="Li R."/>
            <person name="Brown M.L."/>
            <person name="Bradley W.A."/>
        </authorList>
    </citation>
    <scope>FUNCTION</scope>
</reference>
<reference key="8">
    <citation type="journal article" date="2003" name="J. Lipid Res.">
        <title>PPAR(alpha) and PPAR(gamma) activators suppress the monocyte-macrophage apoB-48 receptor.</title>
        <authorList>
            <person name="Haraguchi G."/>
            <person name="Kobayashi Y."/>
            <person name="Brown M.L."/>
            <person name="Tanaka A."/>
            <person name="Isobe M."/>
            <person name="Gianturco S.H."/>
            <person name="Bradley W.A."/>
        </authorList>
    </citation>
    <scope>INDUCTION</scope>
</reference>
<reference key="9">
    <citation type="journal article" date="2005" name="Arterioscler. Thromb. Vasc. Biol.">
        <title>Pitavastatin inhibits remnant lipoprotein-induced macrophage foam cell formation through ApoB48 receptor-dependent mechanism.</title>
        <authorList>
            <person name="Kawakami A."/>
            <person name="Tani M."/>
            <person name="Chiba T."/>
            <person name="Yui K."/>
            <person name="Shinozaki S."/>
            <person name="Nakajima K."/>
            <person name="Tanaka A."/>
            <person name="Shimokado K."/>
            <person name="Yoshida M."/>
        </authorList>
    </citation>
    <scope>FUNCTION</scope>
    <scope>INDUCTION</scope>
</reference>
<reference key="10">
    <citation type="journal article" date="2013" name="J. Proteome Res.">
        <title>Toward a comprehensive characterization of a human cancer cell phosphoproteome.</title>
        <authorList>
            <person name="Zhou H."/>
            <person name="Di Palma S."/>
            <person name="Preisinger C."/>
            <person name="Peng M."/>
            <person name="Polat A.N."/>
            <person name="Heck A.J."/>
            <person name="Mohammed S."/>
        </authorList>
    </citation>
    <scope>PHOSPHORYLATION [LARGE SCALE ANALYSIS] AT THR-572</scope>
    <scope>IDENTIFICATION BY MASS SPECTROMETRY [LARGE SCALE ANALYSIS]</scope>
    <source>
        <tissue>Erythroleukemia</tissue>
    </source>
</reference>
<reference key="11">
    <citation type="journal article" date="2014" name="J. Proteomics">
        <title>An enzyme assisted RP-RPLC approach for in-depth analysis of human liver phosphoproteome.</title>
        <authorList>
            <person name="Bian Y."/>
            <person name="Song C."/>
            <person name="Cheng K."/>
            <person name="Dong M."/>
            <person name="Wang F."/>
            <person name="Huang J."/>
            <person name="Sun D."/>
            <person name="Wang L."/>
            <person name="Ye M."/>
            <person name="Zou H."/>
        </authorList>
    </citation>
    <scope>PHOSPHORYLATION [LARGE SCALE ANALYSIS] AT SER-510</scope>
    <scope>IDENTIFICATION BY MASS SPECTROMETRY [LARGE SCALE ANALYSIS]</scope>
    <source>
        <tissue>Liver</tissue>
    </source>
</reference>
<reference key="12">
    <citation type="journal article" date="2015" name="Proteomics">
        <title>N-terminome analysis of the human mitochondrial proteome.</title>
        <authorList>
            <person name="Vaca Jacome A.S."/>
            <person name="Rabilloud T."/>
            <person name="Schaeffer-Reiss C."/>
            <person name="Rompais M."/>
            <person name="Ayoub D."/>
            <person name="Lane L."/>
            <person name="Bairoch A."/>
            <person name="Van Dorsselaer A."/>
            <person name="Carapito C."/>
        </authorList>
    </citation>
    <scope>IDENTIFICATION BY MASS SPECTROMETRY [LARGE SCALE ANALYSIS]</scope>
</reference>
<reference key="13">
    <citation type="journal article" date="2005" name="J. Hum. Genet.">
        <title>Association of nucleotide variations in the apolipoprotein B48 receptor gene (APOB48R) with hypercholesterolemia.</title>
        <authorList>
            <person name="Fujita Y."/>
            <person name="Ezura Y."/>
            <person name="Bujo H."/>
            <person name="Nakajima T."/>
            <person name="Takahashi K."/>
            <person name="Kamimura K."/>
            <person name="Iino Y."/>
            <person name="Katayama Y."/>
            <person name="Saito Y."/>
            <person name="Emi M."/>
        </authorList>
    </citation>
    <scope>VARIANT ALA-428</scope>
</reference>
<gene>
    <name evidence="12" type="primary">APOBR</name>
    <name type="synonym">APOB48R</name>
</gene>
<name>APOBR_HUMAN</name>
<proteinExistence type="evidence at protein level"/>
<feature type="chain" id="PRO_0000327263" description="Apolipoprotein B receptor">
    <location>
        <begin position="1"/>
        <end position="1097"/>
    </location>
</feature>
<feature type="region of interest" description="Disordered" evidence="2">
    <location>
        <begin position="64"/>
        <end position="249"/>
    </location>
</feature>
<feature type="region of interest" description="Disordered" evidence="2">
    <location>
        <begin position="262"/>
        <end position="376"/>
    </location>
</feature>
<feature type="region of interest" description="Disordered" evidence="2">
    <location>
        <begin position="410"/>
        <end position="739"/>
    </location>
</feature>
<feature type="region of interest" description="Disordered" evidence="2">
    <location>
        <begin position="789"/>
        <end position="866"/>
    </location>
</feature>
<feature type="region of interest" description="Disordered" evidence="2">
    <location>
        <begin position="889"/>
        <end position="1097"/>
    </location>
</feature>
<feature type="compositionally biased region" description="Basic and acidic residues" evidence="2">
    <location>
        <begin position="83"/>
        <end position="92"/>
    </location>
</feature>
<feature type="compositionally biased region" description="Basic and acidic residues" evidence="2">
    <location>
        <begin position="158"/>
        <end position="177"/>
    </location>
</feature>
<feature type="compositionally biased region" description="Basic and acidic residues" evidence="2">
    <location>
        <begin position="185"/>
        <end position="208"/>
    </location>
</feature>
<feature type="compositionally biased region" description="Low complexity" evidence="2">
    <location>
        <begin position="209"/>
        <end position="218"/>
    </location>
</feature>
<feature type="compositionally biased region" description="Basic and acidic residues" evidence="2">
    <location>
        <begin position="219"/>
        <end position="232"/>
    </location>
</feature>
<feature type="compositionally biased region" description="Basic and acidic residues" evidence="2">
    <location>
        <begin position="279"/>
        <end position="302"/>
    </location>
</feature>
<feature type="compositionally biased region" description="Low complexity" evidence="2">
    <location>
        <begin position="312"/>
        <end position="330"/>
    </location>
</feature>
<feature type="compositionally biased region" description="Gly residues" evidence="2">
    <location>
        <begin position="331"/>
        <end position="362"/>
    </location>
</feature>
<feature type="compositionally biased region" description="Basic and acidic residues" evidence="2">
    <location>
        <begin position="463"/>
        <end position="487"/>
    </location>
</feature>
<feature type="compositionally biased region" description="Basic and acidic residues" evidence="2">
    <location>
        <begin position="496"/>
        <end position="505"/>
    </location>
</feature>
<feature type="compositionally biased region" description="Basic and acidic residues" evidence="2">
    <location>
        <begin position="594"/>
        <end position="606"/>
    </location>
</feature>
<feature type="compositionally biased region" description="Basic and acidic residues" evidence="2">
    <location>
        <begin position="626"/>
        <end position="637"/>
    </location>
</feature>
<feature type="compositionally biased region" description="Acidic residues" evidence="2">
    <location>
        <begin position="640"/>
        <end position="652"/>
    </location>
</feature>
<feature type="compositionally biased region" description="Basic and acidic residues" evidence="2">
    <location>
        <begin position="791"/>
        <end position="800"/>
    </location>
</feature>
<feature type="compositionally biased region" description="Basic and acidic residues" evidence="2">
    <location>
        <begin position="892"/>
        <end position="918"/>
    </location>
</feature>
<feature type="compositionally biased region" description="Basic and acidic residues" evidence="2">
    <location>
        <begin position="928"/>
        <end position="950"/>
    </location>
</feature>
<feature type="compositionally biased region" description="Basic residues" evidence="2">
    <location>
        <begin position="1000"/>
        <end position="1017"/>
    </location>
</feature>
<feature type="compositionally biased region" description="Low complexity" evidence="2">
    <location>
        <begin position="1041"/>
        <end position="1050"/>
    </location>
</feature>
<feature type="modified residue" description="Phosphoserine" evidence="1">
    <location>
        <position position="458"/>
    </location>
</feature>
<feature type="modified residue" description="Phosphoserine" evidence="14">
    <location>
        <position position="510"/>
    </location>
</feature>
<feature type="modified residue" description="Phosphothreonine" evidence="13">
    <location>
        <position position="572"/>
    </location>
</feature>
<feature type="modified residue" description="Phosphoserine" evidence="1">
    <location>
        <position position="594"/>
    </location>
</feature>
<feature type="splice variant" id="VSP_060193" description="In isoform 2.">
    <location>
        <begin position="1"/>
        <end position="471"/>
    </location>
</feature>
<feature type="splice variant" id="VSP_060194" description="In isoform 3.">
    <original>SPLRHDGTPVPARRRPLGHGFGLAHPGMMQELQARLGRPKPQ</original>
    <variation>RWEDRLRPGVRDQPGQHSKIPIF</variation>
    <location>
        <begin position="1056"/>
        <end position="1097"/>
    </location>
</feature>
<feature type="sequence variant" id="VAR_081733" description="In dbSNP:rs148114931." evidence="4 6">
    <location>
        <begin position="352"/>
        <end position="360"/>
    </location>
</feature>
<feature type="sequence variant" id="VAR_042432" description="In dbSNP:rs180743." evidence="4 6 8">
    <original>P</original>
    <variation>A</variation>
    <location>
        <position position="428"/>
    </location>
</feature>
<feature type="sequence conflict" description="In Ref. 1; AAF76255/AAF76256." evidence="11" ref="1">
    <original>A</original>
    <variation>S</variation>
    <location>
        <position position="340"/>
    </location>
</feature>
<feature type="sequence conflict" description="In Ref. 1; AAF76255/AAF76256." evidence="11" ref="1">
    <original>E</original>
    <variation>Q</variation>
    <location>
        <position position="390"/>
    </location>
</feature>
<feature type="sequence conflict" description="In Ref. 1; AAF76255/AAF76256, 3; AAI19787/AAI19789 and 4; AK075085." evidence="11" ref="1 3 4">
    <original>V</original>
    <variation>A</variation>
    <location>
        <position position="785"/>
    </location>
</feature>
<sequence>MDFLRLYLPGLHQALRGALDSLGTFVSYLLGDAVPTVEREAQAAEELGVVAVGKTGKIVEEEAQEDLEGLRGSQNEGAGRLRGPGDDRRHEVGSSAVEQTWGWGDGSSHGSQAERQDSGAGETAKAARCQEPSAHLEARKKSKAGSGACQDRSGQAQERQESHEQEVNREERLRSWEQEEEEEEVRAREPGMARGAESEWTWHGETEGKAGAVGPKAAGDNREMEQGVREADAGETEEPGAEGAGKGEEVVVVEKACESTRAWGTWGPGAEPEDWGILGREEARTTPGREEARAILDGEEARTISGGEEAETASGGEEAETASGGEEAGTASGGEEAGIASGGEAGTASGGEEAGTASGGEEAGTASGGDEAWTTSGKEEADLLGVRQTEYGAVPGERLLEATGKVWVLEEEGDEEREAEVSPFPKQPQVLGTERTEEAAESQTAGREAVGGQEAGESFEGQVDLRGKEAEMRQDLGIRADRARMEELVQAEEAQEERGSSRDPVAELPSDGEAEGTADLEATPEARPEEELTGEESEAAQTSCGLLGVEWGGLTHSVTKGQGPELMGGAQTPTKQPEEREAGEVELMGVLALSKEEQERSLEAGPRHAGSVKPEASEAFPGAWENRTRKDMERGNTQEDAADGEQREEEETAGGQTLAAEAEGDRESELSEVPEAGGEGLTTQDAGCGTEEGEASVSENQELDGSTGADAGPCPSLGEAYARETEDEEAEADRTSRRGWRLQAVAVGLPDREDAQTGSVAAGIMGGDVVPHISAAGAGEALEGVLGQGWDSKEKEEAAAGEHAGGQEFGLEGSAEEEVTGRGSQVEAFESREGGPWGGRVEAEESAGAEDSCGLDPAGSQTARAEGMGAMVEAGGLLEKWTLLEEEAVGWQEREQREDSEGRCGDYHPEGEAPRLLDAEGLMVTGGRRAEAKETEPESLEHVRGQEEQPTHQAPAEAAPESVGEAETAEAMGSARGGAANSWSEAPLPGSLLDVSVPRSRVHLSRSSSQRRSRPSFRRTPAWEQQEEPPAPNPPEEELSAPEQRPLQLEEPLEPSPLRHDGTPVPARRRPLGHGFGLAHPGMMQELQARLGRPKPQ</sequence>
<organism>
    <name type="scientific">Homo sapiens</name>
    <name type="common">Human</name>
    <dbReference type="NCBI Taxonomy" id="9606"/>
    <lineage>
        <taxon>Eukaryota</taxon>
        <taxon>Metazoa</taxon>
        <taxon>Chordata</taxon>
        <taxon>Craniata</taxon>
        <taxon>Vertebrata</taxon>
        <taxon>Euteleostomi</taxon>
        <taxon>Mammalia</taxon>
        <taxon>Eutheria</taxon>
        <taxon>Euarchontoglires</taxon>
        <taxon>Primates</taxon>
        <taxon>Haplorrhini</taxon>
        <taxon>Catarrhini</taxon>
        <taxon>Hominidae</taxon>
        <taxon>Homo</taxon>
    </lineage>
</organism>